<evidence type="ECO:0000255" key="1">
    <source>
        <dbReference type="HAMAP-Rule" id="MF_00145"/>
    </source>
</evidence>
<dbReference type="EC" id="2.7.2.3" evidence="1"/>
<dbReference type="EMBL" id="CP001251">
    <property type="protein sequence ID" value="ACK42410.1"/>
    <property type="molecule type" value="Genomic_DNA"/>
</dbReference>
<dbReference type="RefSeq" id="WP_012583493.1">
    <property type="nucleotide sequence ID" value="NC_011661.1"/>
</dbReference>
<dbReference type="RefSeq" id="YP_002353024.1">
    <property type="nucleotide sequence ID" value="NC_011661.1"/>
</dbReference>
<dbReference type="SMR" id="B8E2D3"/>
<dbReference type="FunCoup" id="B8E2D3">
    <property type="interactions" value="334"/>
</dbReference>
<dbReference type="STRING" id="515635.Dtur_1131"/>
<dbReference type="EnsemblBacteria" id="ACK42410">
    <property type="protein sequence ID" value="ACK42410"/>
    <property type="gene ID" value="Dtur_1131"/>
</dbReference>
<dbReference type="KEGG" id="dtu:Dtur_1131"/>
<dbReference type="PATRIC" id="fig|515635.4.peg.1168"/>
<dbReference type="eggNOG" id="COG0126">
    <property type="taxonomic scope" value="Bacteria"/>
</dbReference>
<dbReference type="HOGENOM" id="CLU_025427_0_2_0"/>
<dbReference type="InParanoid" id="B8E2D3"/>
<dbReference type="OrthoDB" id="9808460at2"/>
<dbReference type="UniPathway" id="UPA00109">
    <property type="reaction ID" value="UER00185"/>
</dbReference>
<dbReference type="Proteomes" id="UP000007719">
    <property type="component" value="Chromosome"/>
</dbReference>
<dbReference type="GO" id="GO:0005829">
    <property type="term" value="C:cytosol"/>
    <property type="evidence" value="ECO:0000318"/>
    <property type="project" value="GO_Central"/>
</dbReference>
<dbReference type="GO" id="GO:0043531">
    <property type="term" value="F:ADP binding"/>
    <property type="evidence" value="ECO:0000318"/>
    <property type="project" value="GO_Central"/>
</dbReference>
<dbReference type="GO" id="GO:0005524">
    <property type="term" value="F:ATP binding"/>
    <property type="evidence" value="ECO:0000318"/>
    <property type="project" value="GO_Central"/>
</dbReference>
<dbReference type="GO" id="GO:0004618">
    <property type="term" value="F:phosphoglycerate kinase activity"/>
    <property type="evidence" value="ECO:0000318"/>
    <property type="project" value="GO_Central"/>
</dbReference>
<dbReference type="GO" id="GO:0006094">
    <property type="term" value="P:gluconeogenesis"/>
    <property type="evidence" value="ECO:0000318"/>
    <property type="project" value="GO_Central"/>
</dbReference>
<dbReference type="GO" id="GO:0006096">
    <property type="term" value="P:glycolytic process"/>
    <property type="evidence" value="ECO:0000318"/>
    <property type="project" value="GO_Central"/>
</dbReference>
<dbReference type="CDD" id="cd00318">
    <property type="entry name" value="Phosphoglycerate_kinase"/>
    <property type="match status" value="1"/>
</dbReference>
<dbReference type="FunFam" id="3.40.50.1260:FF:000001">
    <property type="entry name" value="Phosphoglycerate kinase"/>
    <property type="match status" value="1"/>
</dbReference>
<dbReference type="FunFam" id="3.40.50.1260:FF:000002">
    <property type="entry name" value="Phosphoglycerate kinase"/>
    <property type="match status" value="1"/>
</dbReference>
<dbReference type="Gene3D" id="3.40.50.1260">
    <property type="entry name" value="Phosphoglycerate kinase, N-terminal domain"/>
    <property type="match status" value="2"/>
</dbReference>
<dbReference type="HAMAP" id="MF_00145">
    <property type="entry name" value="Phosphoglyc_kinase"/>
    <property type="match status" value="1"/>
</dbReference>
<dbReference type="InterPro" id="IPR001576">
    <property type="entry name" value="Phosphoglycerate_kinase"/>
</dbReference>
<dbReference type="InterPro" id="IPR015911">
    <property type="entry name" value="Phosphoglycerate_kinase_CS"/>
</dbReference>
<dbReference type="InterPro" id="IPR015824">
    <property type="entry name" value="Phosphoglycerate_kinase_N"/>
</dbReference>
<dbReference type="InterPro" id="IPR036043">
    <property type="entry name" value="Phosphoglycerate_kinase_sf"/>
</dbReference>
<dbReference type="PANTHER" id="PTHR11406">
    <property type="entry name" value="PHOSPHOGLYCERATE KINASE"/>
    <property type="match status" value="1"/>
</dbReference>
<dbReference type="PANTHER" id="PTHR11406:SF23">
    <property type="entry name" value="PHOSPHOGLYCERATE KINASE 1, CHLOROPLASTIC-RELATED"/>
    <property type="match status" value="1"/>
</dbReference>
<dbReference type="Pfam" id="PF00162">
    <property type="entry name" value="PGK"/>
    <property type="match status" value="1"/>
</dbReference>
<dbReference type="PIRSF" id="PIRSF000724">
    <property type="entry name" value="Pgk"/>
    <property type="match status" value="1"/>
</dbReference>
<dbReference type="PRINTS" id="PR00477">
    <property type="entry name" value="PHGLYCKINASE"/>
</dbReference>
<dbReference type="SUPFAM" id="SSF53748">
    <property type="entry name" value="Phosphoglycerate kinase"/>
    <property type="match status" value="1"/>
</dbReference>
<dbReference type="PROSITE" id="PS00111">
    <property type="entry name" value="PGLYCERATE_KINASE"/>
    <property type="match status" value="1"/>
</dbReference>
<proteinExistence type="inferred from homology"/>
<feature type="chain" id="PRO_1000192829" description="Phosphoglycerate kinase">
    <location>
        <begin position="1"/>
        <end position="396"/>
    </location>
</feature>
<feature type="binding site" evidence="1">
    <location>
        <begin position="24"/>
        <end position="26"/>
    </location>
    <ligand>
        <name>substrate</name>
    </ligand>
</feature>
<feature type="binding site" evidence="1">
    <location>
        <position position="39"/>
    </location>
    <ligand>
        <name>substrate</name>
    </ligand>
</feature>
<feature type="binding site" evidence="1">
    <location>
        <begin position="62"/>
        <end position="65"/>
    </location>
    <ligand>
        <name>substrate</name>
    </ligand>
</feature>
<feature type="binding site" evidence="1">
    <location>
        <position position="120"/>
    </location>
    <ligand>
        <name>substrate</name>
    </ligand>
</feature>
<feature type="binding site" evidence="1">
    <location>
        <position position="153"/>
    </location>
    <ligand>
        <name>substrate</name>
    </ligand>
</feature>
<feature type="binding site" evidence="1">
    <location>
        <position position="203"/>
    </location>
    <ligand>
        <name>ATP</name>
        <dbReference type="ChEBI" id="CHEBI:30616"/>
    </ligand>
</feature>
<feature type="binding site" evidence="1">
    <location>
        <position position="294"/>
    </location>
    <ligand>
        <name>ATP</name>
        <dbReference type="ChEBI" id="CHEBI:30616"/>
    </ligand>
</feature>
<feature type="binding site" evidence="1">
    <location>
        <position position="325"/>
    </location>
    <ligand>
        <name>ATP</name>
        <dbReference type="ChEBI" id="CHEBI:30616"/>
    </ligand>
</feature>
<feature type="binding site" evidence="1">
    <location>
        <begin position="352"/>
        <end position="355"/>
    </location>
    <ligand>
        <name>ATP</name>
        <dbReference type="ChEBI" id="CHEBI:30616"/>
    </ligand>
</feature>
<sequence length="396" mass="43488">MAKKTILDLRDEDLKGKRVLVRVDFNVPLKNGVITDDRRIREALPTIKYLMDKGAKVILVSHLGRPKGFQDDLRLDPVAKRLSELLGKPVKKLNDCIGEEVEREISNMKEGDVILLENIRFYKEEEANDPEFAKKLASLADLYVNDAFGTAHRAHASTAGVAQYIPGVAGLLMKKEIEIMGKALESPERPFICILGGAKVSDKIGVIKNLMNKVDGFLIGGGMMFTFLKALGYEIGKSIVEEDKLDLAREIMNMAKERGIQFLLPKDAVVVKEIKEDAPTSIKDIDKFEKDDIGVDIGPKTIELFREEILKAKTIIWNGPMGIFEIPAFANGTRKIAEAIAENRNCVSIVGGGDSAAAIQTLGLEDKFTHISTGGGASLEFLEGKELPGVAVLQDK</sequence>
<protein>
    <recommendedName>
        <fullName evidence="1">Phosphoglycerate kinase</fullName>
        <ecNumber evidence="1">2.7.2.3</ecNumber>
    </recommendedName>
</protein>
<keyword id="KW-0067">ATP-binding</keyword>
<keyword id="KW-0963">Cytoplasm</keyword>
<keyword id="KW-0324">Glycolysis</keyword>
<keyword id="KW-0418">Kinase</keyword>
<keyword id="KW-0547">Nucleotide-binding</keyword>
<keyword id="KW-1185">Reference proteome</keyword>
<keyword id="KW-0808">Transferase</keyword>
<comment type="catalytic activity">
    <reaction evidence="1">
        <text>(2R)-3-phosphoglycerate + ATP = (2R)-3-phospho-glyceroyl phosphate + ADP</text>
        <dbReference type="Rhea" id="RHEA:14801"/>
        <dbReference type="ChEBI" id="CHEBI:30616"/>
        <dbReference type="ChEBI" id="CHEBI:57604"/>
        <dbReference type="ChEBI" id="CHEBI:58272"/>
        <dbReference type="ChEBI" id="CHEBI:456216"/>
        <dbReference type="EC" id="2.7.2.3"/>
    </reaction>
</comment>
<comment type="pathway">
    <text evidence="1">Carbohydrate degradation; glycolysis; pyruvate from D-glyceraldehyde 3-phosphate: step 2/5.</text>
</comment>
<comment type="subunit">
    <text evidence="1">Monomer.</text>
</comment>
<comment type="subcellular location">
    <subcellularLocation>
        <location evidence="1">Cytoplasm</location>
    </subcellularLocation>
</comment>
<comment type="similarity">
    <text evidence="1">Belongs to the phosphoglycerate kinase family.</text>
</comment>
<gene>
    <name evidence="1" type="primary">pgk</name>
    <name type="ordered locus">Dtur_1131</name>
</gene>
<accession>B8E2D3</accession>
<reference key="1">
    <citation type="journal article" date="2016" name="Front. Microbiol.">
        <title>The complete genome sequence of hyperthermophile Dictyoglomus turgidum DSM 6724 reveals a specialized carbohydrate fermentor.</title>
        <authorList>
            <person name="Brumm P.J."/>
            <person name="Gowda K."/>
            <person name="Robb F.T."/>
            <person name="Mead D.A."/>
        </authorList>
    </citation>
    <scope>NUCLEOTIDE SEQUENCE [LARGE SCALE GENOMIC DNA]</scope>
    <source>
        <strain>DSM 6724 / Z-1310</strain>
    </source>
</reference>
<organism>
    <name type="scientific">Dictyoglomus turgidum (strain DSM 6724 / Z-1310)</name>
    <dbReference type="NCBI Taxonomy" id="515635"/>
    <lineage>
        <taxon>Bacteria</taxon>
        <taxon>Pseudomonadati</taxon>
        <taxon>Dictyoglomota</taxon>
        <taxon>Dictyoglomia</taxon>
        <taxon>Dictyoglomales</taxon>
        <taxon>Dictyoglomaceae</taxon>
        <taxon>Dictyoglomus</taxon>
    </lineage>
</organism>
<name>PGK_DICTD</name>